<evidence type="ECO:0000255" key="1">
    <source>
        <dbReference type="HAMAP-Rule" id="MF_01220"/>
    </source>
</evidence>
<gene>
    <name evidence="1" type="primary">pyrH</name>
</gene>
<protein>
    <recommendedName>
        <fullName evidence="1">Uridylate kinase</fullName>
        <shortName evidence="1">UK</shortName>
        <ecNumber evidence="1">2.7.4.22</ecNumber>
    </recommendedName>
    <alternativeName>
        <fullName evidence="1">Uridine monophosphate kinase</fullName>
        <shortName evidence="1">UMP kinase</shortName>
        <shortName evidence="1">UMPK</shortName>
    </alternativeName>
</protein>
<comment type="function">
    <text evidence="1">Catalyzes the reversible phosphorylation of UMP to UDP.</text>
</comment>
<comment type="catalytic activity">
    <reaction evidence="1">
        <text>UMP + ATP = UDP + ADP</text>
        <dbReference type="Rhea" id="RHEA:24400"/>
        <dbReference type="ChEBI" id="CHEBI:30616"/>
        <dbReference type="ChEBI" id="CHEBI:57865"/>
        <dbReference type="ChEBI" id="CHEBI:58223"/>
        <dbReference type="ChEBI" id="CHEBI:456216"/>
        <dbReference type="EC" id="2.7.4.22"/>
    </reaction>
</comment>
<comment type="activity regulation">
    <text evidence="1">Allosterically activated by GTP. Inhibited by UTP.</text>
</comment>
<comment type="pathway">
    <text evidence="1">Pyrimidine metabolism; CTP biosynthesis via de novo pathway; UDP from UMP (UMPK route): step 1/1.</text>
</comment>
<comment type="subunit">
    <text evidence="1">Homohexamer.</text>
</comment>
<comment type="subcellular location">
    <subcellularLocation>
        <location evidence="1">Cytoplasm</location>
    </subcellularLocation>
</comment>
<comment type="similarity">
    <text evidence="1">Belongs to the UMP kinase family.</text>
</comment>
<name>PYRH_LIMRT</name>
<sequence length="240" mass="25958">MSDIKYNRVILKLSGEALAGEKGFGINPPVLKDVAKELKEVHELGVQIAIVVGGGNMWRGVTGAELGMERAQADYIGMLATIMNALSLQDALESLDVPTRVQTSIEMRQIAEPYIRRKAIRHLEKDRIVIFAGGTGSPYFSTDTTAALRAAEINADAILMGKNGVDGVYNADPNKDASAVKFDHLTHMDLIEKNLHVMDTTASSLSMDNHIPLVVFNLNTPGNIMKVVKGQEVGTTIEGD</sequence>
<dbReference type="EC" id="2.7.4.22" evidence="1"/>
<dbReference type="EMBL" id="AF401482">
    <property type="protein sequence ID" value="AAL60143.1"/>
    <property type="molecule type" value="Genomic_DNA"/>
</dbReference>
<dbReference type="SMR" id="Q8VS53"/>
<dbReference type="UniPathway" id="UPA00159">
    <property type="reaction ID" value="UER00275"/>
</dbReference>
<dbReference type="GO" id="GO:0005737">
    <property type="term" value="C:cytoplasm"/>
    <property type="evidence" value="ECO:0007669"/>
    <property type="project" value="UniProtKB-SubCell"/>
</dbReference>
<dbReference type="GO" id="GO:0005524">
    <property type="term" value="F:ATP binding"/>
    <property type="evidence" value="ECO:0007669"/>
    <property type="project" value="UniProtKB-KW"/>
</dbReference>
<dbReference type="GO" id="GO:0033862">
    <property type="term" value="F:UMP kinase activity"/>
    <property type="evidence" value="ECO:0007669"/>
    <property type="project" value="UniProtKB-EC"/>
</dbReference>
<dbReference type="GO" id="GO:0044210">
    <property type="term" value="P:'de novo' CTP biosynthetic process"/>
    <property type="evidence" value="ECO:0007669"/>
    <property type="project" value="UniProtKB-UniRule"/>
</dbReference>
<dbReference type="GO" id="GO:0006225">
    <property type="term" value="P:UDP biosynthetic process"/>
    <property type="evidence" value="ECO:0007669"/>
    <property type="project" value="TreeGrafter"/>
</dbReference>
<dbReference type="CDD" id="cd04254">
    <property type="entry name" value="AAK_UMPK-PyrH-Ec"/>
    <property type="match status" value="1"/>
</dbReference>
<dbReference type="FunFam" id="3.40.1160.10:FF:000001">
    <property type="entry name" value="Uridylate kinase"/>
    <property type="match status" value="1"/>
</dbReference>
<dbReference type="Gene3D" id="3.40.1160.10">
    <property type="entry name" value="Acetylglutamate kinase-like"/>
    <property type="match status" value="1"/>
</dbReference>
<dbReference type="HAMAP" id="MF_01220_B">
    <property type="entry name" value="PyrH_B"/>
    <property type="match status" value="1"/>
</dbReference>
<dbReference type="InterPro" id="IPR036393">
    <property type="entry name" value="AceGlu_kinase-like_sf"/>
</dbReference>
<dbReference type="InterPro" id="IPR001048">
    <property type="entry name" value="Asp/Glu/Uridylate_kinase"/>
</dbReference>
<dbReference type="InterPro" id="IPR011817">
    <property type="entry name" value="Uridylate_kinase"/>
</dbReference>
<dbReference type="InterPro" id="IPR015963">
    <property type="entry name" value="Uridylate_kinase_bac"/>
</dbReference>
<dbReference type="NCBIfam" id="TIGR02075">
    <property type="entry name" value="pyrH_bact"/>
    <property type="match status" value="1"/>
</dbReference>
<dbReference type="PANTHER" id="PTHR42833">
    <property type="entry name" value="URIDYLATE KINASE"/>
    <property type="match status" value="1"/>
</dbReference>
<dbReference type="PANTHER" id="PTHR42833:SF4">
    <property type="entry name" value="URIDYLATE KINASE PUMPKIN, CHLOROPLASTIC"/>
    <property type="match status" value="1"/>
</dbReference>
<dbReference type="Pfam" id="PF00696">
    <property type="entry name" value="AA_kinase"/>
    <property type="match status" value="1"/>
</dbReference>
<dbReference type="PIRSF" id="PIRSF005650">
    <property type="entry name" value="Uridylate_kin"/>
    <property type="match status" value="1"/>
</dbReference>
<dbReference type="SUPFAM" id="SSF53633">
    <property type="entry name" value="Carbamate kinase-like"/>
    <property type="match status" value="1"/>
</dbReference>
<organism>
    <name type="scientific">Limosilactobacillus reuteri</name>
    <name type="common">Lactobacillus reuteri</name>
    <dbReference type="NCBI Taxonomy" id="1598"/>
    <lineage>
        <taxon>Bacteria</taxon>
        <taxon>Bacillati</taxon>
        <taxon>Bacillota</taxon>
        <taxon>Bacilli</taxon>
        <taxon>Lactobacillales</taxon>
        <taxon>Lactobacillaceae</taxon>
        <taxon>Limosilactobacillus</taxon>
    </lineage>
</organism>
<proteinExistence type="inferred from homology"/>
<feature type="chain" id="PRO_0000143852" description="Uridylate kinase">
    <location>
        <begin position="1"/>
        <end position="240"/>
    </location>
</feature>
<feature type="region of interest" description="Involved in allosteric activation by GTP" evidence="1">
    <location>
        <begin position="20"/>
        <end position="25"/>
    </location>
</feature>
<feature type="binding site" evidence="1">
    <location>
        <begin position="12"/>
        <end position="15"/>
    </location>
    <ligand>
        <name>ATP</name>
        <dbReference type="ChEBI" id="CHEBI:30616"/>
    </ligand>
</feature>
<feature type="binding site" evidence="1">
    <location>
        <position position="54"/>
    </location>
    <ligand>
        <name>UMP</name>
        <dbReference type="ChEBI" id="CHEBI:57865"/>
    </ligand>
</feature>
<feature type="binding site" evidence="1">
    <location>
        <position position="55"/>
    </location>
    <ligand>
        <name>ATP</name>
        <dbReference type="ChEBI" id="CHEBI:30616"/>
    </ligand>
</feature>
<feature type="binding site" evidence="1">
    <location>
        <position position="59"/>
    </location>
    <ligand>
        <name>ATP</name>
        <dbReference type="ChEBI" id="CHEBI:30616"/>
    </ligand>
</feature>
<feature type="binding site" evidence="1">
    <location>
        <position position="74"/>
    </location>
    <ligand>
        <name>UMP</name>
        <dbReference type="ChEBI" id="CHEBI:57865"/>
    </ligand>
</feature>
<feature type="binding site" evidence="1">
    <location>
        <begin position="135"/>
        <end position="142"/>
    </location>
    <ligand>
        <name>UMP</name>
        <dbReference type="ChEBI" id="CHEBI:57865"/>
    </ligand>
</feature>
<feature type="binding site" evidence="1">
    <location>
        <position position="163"/>
    </location>
    <ligand>
        <name>ATP</name>
        <dbReference type="ChEBI" id="CHEBI:30616"/>
    </ligand>
</feature>
<feature type="binding site" evidence="1">
    <location>
        <position position="169"/>
    </location>
    <ligand>
        <name>ATP</name>
        <dbReference type="ChEBI" id="CHEBI:30616"/>
    </ligand>
</feature>
<feature type="binding site" evidence="1">
    <location>
        <position position="172"/>
    </location>
    <ligand>
        <name>ATP</name>
        <dbReference type="ChEBI" id="CHEBI:30616"/>
    </ligand>
</feature>
<keyword id="KW-0021">Allosteric enzyme</keyword>
<keyword id="KW-0067">ATP-binding</keyword>
<keyword id="KW-0963">Cytoplasm</keyword>
<keyword id="KW-0418">Kinase</keyword>
<keyword id="KW-0547">Nucleotide-binding</keyword>
<keyword id="KW-0665">Pyrimidine biosynthesis</keyword>
<keyword id="KW-0808">Transferase</keyword>
<accession>Q8VS53</accession>
<reference key="1">
    <citation type="submission" date="2001-07" db="EMBL/GenBank/DDBJ databases">
        <title>Cloning of UMP-kinase gene from Lactobacillus reuteri ATCC 557939.</title>
        <authorList>
            <person name="Nam S.J."/>
            <person name="Kim J.K."/>
            <person name="Park J.Y."/>
            <person name="Ha Y.L."/>
            <person name="Kim J.H."/>
        </authorList>
    </citation>
    <scope>NUCLEOTIDE SEQUENCE [GENOMIC DNA]</scope>
    <source>
        <strain>ATCC 55739 / PYR8</strain>
    </source>
</reference>